<reference key="1">
    <citation type="journal article" date="2005" name="Nucleic Acids Res.">
        <title>Genome dynamics and diversity of Shigella species, the etiologic agents of bacillary dysentery.</title>
        <authorList>
            <person name="Yang F."/>
            <person name="Yang J."/>
            <person name="Zhang X."/>
            <person name="Chen L."/>
            <person name="Jiang Y."/>
            <person name="Yan Y."/>
            <person name="Tang X."/>
            <person name="Wang J."/>
            <person name="Xiong Z."/>
            <person name="Dong J."/>
            <person name="Xue Y."/>
            <person name="Zhu Y."/>
            <person name="Xu X."/>
            <person name="Sun L."/>
            <person name="Chen S."/>
            <person name="Nie H."/>
            <person name="Peng J."/>
            <person name="Xu J."/>
            <person name="Wang Y."/>
            <person name="Yuan Z."/>
            <person name="Wen Y."/>
            <person name="Yao Z."/>
            <person name="Shen Y."/>
            <person name="Qiang B."/>
            <person name="Hou Y."/>
            <person name="Yu J."/>
            <person name="Jin Q."/>
        </authorList>
    </citation>
    <scope>NUCLEOTIDE SEQUENCE [LARGE SCALE GENOMIC DNA]</scope>
    <source>
        <strain>Sb227</strain>
    </source>
</reference>
<sequence length="232" mass="25862">MENQPKLNSSKEVIAFLAERFPHCFSAEGEARPLKIGIFQDLVDRVAGEMNLSKTQLRSALRLYTSSWRYLYGVKPGATRVDLDGNPCGELDEQHVEHARKQLEEAKARVQAQRAEQQAKKREAAAAAGEKEDAPRRERKPRPTTPRRKEGAERKPRAQKPVEKAPKTVKAPREEQHTPVSDISALTVGQALKVKAGQNAMDATVLEITKDGVRVQLNSGMSLIVRAEHLVF</sequence>
<accession>Q321Y4</accession>
<evidence type="ECO:0000255" key="1">
    <source>
        <dbReference type="HAMAP-Rule" id="MF_00749"/>
    </source>
</evidence>
<evidence type="ECO:0000256" key="2">
    <source>
        <dbReference type="SAM" id="MobiDB-lite"/>
    </source>
</evidence>
<protein>
    <recommendedName>
        <fullName evidence="1">RNA chaperone ProQ</fullName>
    </recommendedName>
</protein>
<keyword id="KW-0143">Chaperone</keyword>
<keyword id="KW-0963">Cytoplasm</keyword>
<keyword id="KW-0694">RNA-binding</keyword>
<name>PROQ_SHIBS</name>
<organism>
    <name type="scientific">Shigella boydii serotype 4 (strain Sb227)</name>
    <dbReference type="NCBI Taxonomy" id="300268"/>
    <lineage>
        <taxon>Bacteria</taxon>
        <taxon>Pseudomonadati</taxon>
        <taxon>Pseudomonadota</taxon>
        <taxon>Gammaproteobacteria</taxon>
        <taxon>Enterobacterales</taxon>
        <taxon>Enterobacteriaceae</taxon>
        <taxon>Shigella</taxon>
    </lineage>
</organism>
<comment type="function">
    <text evidence="1">RNA chaperone with significant RNA binding, RNA strand exchange and RNA duplexing activities. May regulate ProP activity through an RNA-based, post-transcriptional mechanism.</text>
</comment>
<comment type="subcellular location">
    <subcellularLocation>
        <location evidence="1">Cytoplasm</location>
    </subcellularLocation>
</comment>
<comment type="similarity">
    <text evidence="1">Belongs to the ProQ family.</text>
</comment>
<gene>
    <name evidence="1" type="primary">proQ</name>
    <name type="ordered locus">SBO_1246</name>
</gene>
<proteinExistence type="inferred from homology"/>
<dbReference type="EMBL" id="CP000036">
    <property type="protein sequence ID" value="ABB65874.1"/>
    <property type="molecule type" value="Genomic_DNA"/>
</dbReference>
<dbReference type="RefSeq" id="WP_000431370.1">
    <property type="nucleotide sequence ID" value="NC_007613.1"/>
</dbReference>
<dbReference type="SMR" id="Q321Y4"/>
<dbReference type="GeneID" id="93776081"/>
<dbReference type="KEGG" id="sbo:SBO_1246"/>
<dbReference type="HOGENOM" id="CLU_113254_0_0_6"/>
<dbReference type="Proteomes" id="UP000007067">
    <property type="component" value="Chromosome"/>
</dbReference>
<dbReference type="GO" id="GO:0005829">
    <property type="term" value="C:cytosol"/>
    <property type="evidence" value="ECO:0007669"/>
    <property type="project" value="TreeGrafter"/>
</dbReference>
<dbReference type="GO" id="GO:0033592">
    <property type="term" value="F:RNA strand annealing activity"/>
    <property type="evidence" value="ECO:0007669"/>
    <property type="project" value="UniProtKB-UniRule"/>
</dbReference>
<dbReference type="GO" id="GO:0034057">
    <property type="term" value="F:RNA strand-exchange activity"/>
    <property type="evidence" value="ECO:0007669"/>
    <property type="project" value="UniProtKB-UniRule"/>
</dbReference>
<dbReference type="GO" id="GO:0010608">
    <property type="term" value="P:post-transcriptional regulation of gene expression"/>
    <property type="evidence" value="ECO:0007669"/>
    <property type="project" value="InterPro"/>
</dbReference>
<dbReference type="FunFam" id="1.10.1710.10:FF:000001">
    <property type="entry name" value="RNA chaperone ProQ"/>
    <property type="match status" value="1"/>
</dbReference>
<dbReference type="Gene3D" id="1.10.1710.10">
    <property type="entry name" value="ProQ/FinO domain"/>
    <property type="match status" value="1"/>
</dbReference>
<dbReference type="HAMAP" id="MF_00749">
    <property type="entry name" value="ProQ"/>
    <property type="match status" value="1"/>
</dbReference>
<dbReference type="InterPro" id="IPR023529">
    <property type="entry name" value="ProQ"/>
</dbReference>
<dbReference type="InterPro" id="IPR016103">
    <property type="entry name" value="ProQ/FinO"/>
</dbReference>
<dbReference type="InterPro" id="IPR036442">
    <property type="entry name" value="ProQ/FinO_sf"/>
</dbReference>
<dbReference type="InterPro" id="IPR035236">
    <property type="entry name" value="ProQ_C"/>
</dbReference>
<dbReference type="NCBIfam" id="NF003434">
    <property type="entry name" value="PRK04950.1"/>
    <property type="match status" value="1"/>
</dbReference>
<dbReference type="PANTHER" id="PTHR38106">
    <property type="entry name" value="RNA CHAPERONE PROQ"/>
    <property type="match status" value="1"/>
</dbReference>
<dbReference type="PANTHER" id="PTHR38106:SF1">
    <property type="entry name" value="RNA CHAPERONE PROQ"/>
    <property type="match status" value="1"/>
</dbReference>
<dbReference type="Pfam" id="PF04352">
    <property type="entry name" value="ProQ"/>
    <property type="match status" value="1"/>
</dbReference>
<dbReference type="Pfam" id="PF17516">
    <property type="entry name" value="ProQ_C"/>
    <property type="match status" value="1"/>
</dbReference>
<dbReference type="SMART" id="SM00945">
    <property type="entry name" value="ProQ"/>
    <property type="match status" value="1"/>
</dbReference>
<dbReference type="SUPFAM" id="SSF48657">
    <property type="entry name" value="FinO-like"/>
    <property type="match status" value="1"/>
</dbReference>
<feature type="chain" id="PRO_0000303098" description="RNA chaperone ProQ">
    <location>
        <begin position="1"/>
        <end position="232"/>
    </location>
</feature>
<feature type="region of interest" description="Disordered" evidence="2">
    <location>
        <begin position="105"/>
        <end position="182"/>
    </location>
</feature>
<feature type="compositionally biased region" description="Basic and acidic residues" evidence="2">
    <location>
        <begin position="117"/>
        <end position="136"/>
    </location>
</feature>
<feature type="compositionally biased region" description="Basic residues" evidence="2">
    <location>
        <begin position="137"/>
        <end position="146"/>
    </location>
</feature>
<feature type="compositionally biased region" description="Basic and acidic residues" evidence="2">
    <location>
        <begin position="147"/>
        <end position="177"/>
    </location>
</feature>